<gene>
    <name evidence="6 8" type="primary">vanin-like</name>
    <name evidence="8" type="ORF">CG32754</name>
</gene>
<reference key="1">
    <citation type="journal article" date="1999" name="Immunogenetics">
        <title>An ESTs description of the new vanin gene family conserved from fly to human.</title>
        <authorList>
            <person name="Granjeaud S."/>
            <person name="Naquet P."/>
            <person name="Galland F."/>
        </authorList>
    </citation>
    <scope>NUCLEOTIDE SEQUENCE [MRNA]</scope>
    <scope>TISSUE SPECIFICITY</scope>
</reference>
<reference key="2">
    <citation type="journal article" date="2000" name="Science">
        <title>The genome sequence of Drosophila melanogaster.</title>
        <authorList>
            <person name="Adams M.D."/>
            <person name="Celniker S.E."/>
            <person name="Holt R.A."/>
            <person name="Evans C.A."/>
            <person name="Gocayne J.D."/>
            <person name="Amanatides P.G."/>
            <person name="Scherer S.E."/>
            <person name="Li P.W."/>
            <person name="Hoskins R.A."/>
            <person name="Galle R.F."/>
            <person name="George R.A."/>
            <person name="Lewis S.E."/>
            <person name="Richards S."/>
            <person name="Ashburner M."/>
            <person name="Henderson S.N."/>
            <person name="Sutton G.G."/>
            <person name="Wortman J.R."/>
            <person name="Yandell M.D."/>
            <person name="Zhang Q."/>
            <person name="Chen L.X."/>
            <person name="Brandon R.C."/>
            <person name="Rogers Y.-H.C."/>
            <person name="Blazej R.G."/>
            <person name="Champe M."/>
            <person name="Pfeiffer B.D."/>
            <person name="Wan K.H."/>
            <person name="Doyle C."/>
            <person name="Baxter E.G."/>
            <person name="Helt G."/>
            <person name="Nelson C.R."/>
            <person name="Miklos G.L.G."/>
            <person name="Abril J.F."/>
            <person name="Agbayani A."/>
            <person name="An H.-J."/>
            <person name="Andrews-Pfannkoch C."/>
            <person name="Baldwin D."/>
            <person name="Ballew R.M."/>
            <person name="Basu A."/>
            <person name="Baxendale J."/>
            <person name="Bayraktaroglu L."/>
            <person name="Beasley E.M."/>
            <person name="Beeson K.Y."/>
            <person name="Benos P.V."/>
            <person name="Berman B.P."/>
            <person name="Bhandari D."/>
            <person name="Bolshakov S."/>
            <person name="Borkova D."/>
            <person name="Botchan M.R."/>
            <person name="Bouck J."/>
            <person name="Brokstein P."/>
            <person name="Brottier P."/>
            <person name="Burtis K.C."/>
            <person name="Busam D.A."/>
            <person name="Butler H."/>
            <person name="Cadieu E."/>
            <person name="Center A."/>
            <person name="Chandra I."/>
            <person name="Cherry J.M."/>
            <person name="Cawley S."/>
            <person name="Dahlke C."/>
            <person name="Davenport L.B."/>
            <person name="Davies P."/>
            <person name="de Pablos B."/>
            <person name="Delcher A."/>
            <person name="Deng Z."/>
            <person name="Mays A.D."/>
            <person name="Dew I."/>
            <person name="Dietz S.M."/>
            <person name="Dodson K."/>
            <person name="Doup L.E."/>
            <person name="Downes M."/>
            <person name="Dugan-Rocha S."/>
            <person name="Dunkov B.C."/>
            <person name="Dunn P."/>
            <person name="Durbin K.J."/>
            <person name="Evangelista C.C."/>
            <person name="Ferraz C."/>
            <person name="Ferriera S."/>
            <person name="Fleischmann W."/>
            <person name="Fosler C."/>
            <person name="Gabrielian A.E."/>
            <person name="Garg N.S."/>
            <person name="Gelbart W.M."/>
            <person name="Glasser K."/>
            <person name="Glodek A."/>
            <person name="Gong F."/>
            <person name="Gorrell J.H."/>
            <person name="Gu Z."/>
            <person name="Guan P."/>
            <person name="Harris M."/>
            <person name="Harris N.L."/>
            <person name="Harvey D.A."/>
            <person name="Heiman T.J."/>
            <person name="Hernandez J.R."/>
            <person name="Houck J."/>
            <person name="Hostin D."/>
            <person name="Houston K.A."/>
            <person name="Howland T.J."/>
            <person name="Wei M.-H."/>
            <person name="Ibegwam C."/>
            <person name="Jalali M."/>
            <person name="Kalush F."/>
            <person name="Karpen G.H."/>
            <person name="Ke Z."/>
            <person name="Kennison J.A."/>
            <person name="Ketchum K.A."/>
            <person name="Kimmel B.E."/>
            <person name="Kodira C.D."/>
            <person name="Kraft C.L."/>
            <person name="Kravitz S."/>
            <person name="Kulp D."/>
            <person name="Lai Z."/>
            <person name="Lasko P."/>
            <person name="Lei Y."/>
            <person name="Levitsky A.A."/>
            <person name="Li J.H."/>
            <person name="Li Z."/>
            <person name="Liang Y."/>
            <person name="Lin X."/>
            <person name="Liu X."/>
            <person name="Mattei B."/>
            <person name="McIntosh T.C."/>
            <person name="McLeod M.P."/>
            <person name="McPherson D."/>
            <person name="Merkulov G."/>
            <person name="Milshina N.V."/>
            <person name="Mobarry C."/>
            <person name="Morris J."/>
            <person name="Moshrefi A."/>
            <person name="Mount S.M."/>
            <person name="Moy M."/>
            <person name="Murphy B."/>
            <person name="Murphy L."/>
            <person name="Muzny D.M."/>
            <person name="Nelson D.L."/>
            <person name="Nelson D.R."/>
            <person name="Nelson K.A."/>
            <person name="Nixon K."/>
            <person name="Nusskern D.R."/>
            <person name="Pacleb J.M."/>
            <person name="Palazzolo M."/>
            <person name="Pittman G.S."/>
            <person name="Pan S."/>
            <person name="Pollard J."/>
            <person name="Puri V."/>
            <person name="Reese M.G."/>
            <person name="Reinert K."/>
            <person name="Remington K."/>
            <person name="Saunders R.D.C."/>
            <person name="Scheeler F."/>
            <person name="Shen H."/>
            <person name="Shue B.C."/>
            <person name="Siden-Kiamos I."/>
            <person name="Simpson M."/>
            <person name="Skupski M.P."/>
            <person name="Smith T.J."/>
            <person name="Spier E."/>
            <person name="Spradling A.C."/>
            <person name="Stapleton M."/>
            <person name="Strong R."/>
            <person name="Sun E."/>
            <person name="Svirskas R."/>
            <person name="Tector C."/>
            <person name="Turner R."/>
            <person name="Venter E."/>
            <person name="Wang A.H."/>
            <person name="Wang X."/>
            <person name="Wang Z.-Y."/>
            <person name="Wassarman D.A."/>
            <person name="Weinstock G.M."/>
            <person name="Weissenbach J."/>
            <person name="Williams S.M."/>
            <person name="Woodage T."/>
            <person name="Worley K.C."/>
            <person name="Wu D."/>
            <person name="Yang S."/>
            <person name="Yao Q.A."/>
            <person name="Ye J."/>
            <person name="Yeh R.-F."/>
            <person name="Zaveri J.S."/>
            <person name="Zhan M."/>
            <person name="Zhang G."/>
            <person name="Zhao Q."/>
            <person name="Zheng L."/>
            <person name="Zheng X.H."/>
            <person name="Zhong F.N."/>
            <person name="Zhong W."/>
            <person name="Zhou X."/>
            <person name="Zhu S.C."/>
            <person name="Zhu X."/>
            <person name="Smith H.O."/>
            <person name="Gibbs R.A."/>
            <person name="Myers E.W."/>
            <person name="Rubin G.M."/>
            <person name="Venter J.C."/>
        </authorList>
    </citation>
    <scope>NUCLEOTIDE SEQUENCE [LARGE SCALE GENOMIC DNA]</scope>
    <source>
        <strain>Berkeley</strain>
    </source>
</reference>
<reference key="3">
    <citation type="journal article" date="2002" name="Genome Biol.">
        <title>Annotation of the Drosophila melanogaster euchromatic genome: a systematic review.</title>
        <authorList>
            <person name="Misra S."/>
            <person name="Crosby M.A."/>
            <person name="Mungall C.J."/>
            <person name="Matthews B.B."/>
            <person name="Campbell K.S."/>
            <person name="Hradecky P."/>
            <person name="Huang Y."/>
            <person name="Kaminker J.S."/>
            <person name="Millburn G.H."/>
            <person name="Prochnik S.E."/>
            <person name="Smith C.D."/>
            <person name="Tupy J.L."/>
            <person name="Whitfield E.J."/>
            <person name="Bayraktaroglu L."/>
            <person name="Berman B.P."/>
            <person name="Bettencourt B.R."/>
            <person name="Celniker S.E."/>
            <person name="de Grey A.D.N.J."/>
            <person name="Drysdale R.A."/>
            <person name="Harris N.L."/>
            <person name="Richter J."/>
            <person name="Russo S."/>
            <person name="Schroeder A.J."/>
            <person name="Shu S.Q."/>
            <person name="Stapleton M."/>
            <person name="Yamada C."/>
            <person name="Ashburner M."/>
            <person name="Gelbart W.M."/>
            <person name="Rubin G.M."/>
            <person name="Lewis S.E."/>
        </authorList>
    </citation>
    <scope>GENOME REANNOTATION</scope>
    <source>
        <strain>Berkeley</strain>
    </source>
</reference>
<reference key="4">
    <citation type="journal article" date="2002" name="Genome Biol.">
        <title>A Drosophila full-length cDNA resource.</title>
        <authorList>
            <person name="Stapleton M."/>
            <person name="Carlson J.W."/>
            <person name="Brokstein P."/>
            <person name="Yu C."/>
            <person name="Champe M."/>
            <person name="George R.A."/>
            <person name="Guarin H."/>
            <person name="Kronmiller B."/>
            <person name="Pacleb J.M."/>
            <person name="Park S."/>
            <person name="Wan K.H."/>
            <person name="Rubin G.M."/>
            <person name="Celniker S.E."/>
        </authorList>
    </citation>
    <scope>NUCLEOTIDE SEQUENCE [LARGE SCALE MRNA]</scope>
    <source>
        <strain>Berkeley</strain>
        <tissue>Larva</tissue>
        <tissue>Pupae</tissue>
    </source>
</reference>
<reference key="5">
    <citation type="journal article" date="2007" name="Glycobiology">
        <title>Identification of N-glycosylated proteins from the central nervous system of Drosophila melanogaster.</title>
        <authorList>
            <person name="Koles K."/>
            <person name="Lim J.-M."/>
            <person name="Aoki K."/>
            <person name="Porterfield M."/>
            <person name="Tiemeyer M."/>
            <person name="Wells L."/>
            <person name="Panin V."/>
        </authorList>
    </citation>
    <scope>GLYCOSYLATION [LARGE SCALE ANALYSIS] AT ASN-354</scope>
    <scope>IDENTIFICATION BY MASS SPECTROMETRY</scope>
    <source>
        <strain>Oregon-R</strain>
        <tissue>Head</tissue>
    </source>
</reference>
<reference key="6">
    <citation type="journal article" date="2014" name="G3 (Bethesda)">
        <title>Developmental ethanol exposure leads to dysregulation of lipid metabolism and oxidative stress in Drosophila.</title>
        <authorList>
            <person name="Logan-Garbisch T."/>
            <person name="Bortolazzo A."/>
            <person name="Luu P."/>
            <person name="Ford A."/>
            <person name="Do D."/>
            <person name="Khodabakhshi P."/>
            <person name="French R.L."/>
        </authorList>
    </citation>
    <scope>TISSUE SPECIFICITY</scope>
    <scope>INDUCTION</scope>
</reference>
<feature type="signal peptide" evidence="1">
    <location>
        <begin position="1"/>
        <end position="22"/>
    </location>
</feature>
<feature type="chain" id="PRO_0000019724" description="Vanin-like protein 1" evidence="1">
    <location>
        <begin position="23"/>
        <end position="531"/>
    </location>
</feature>
<feature type="propeptide" id="PRO_0000450614" description="Removed in mature form" evidence="1">
    <location>
        <begin position="532"/>
        <end position="558"/>
    </location>
</feature>
<feature type="domain" description="CN hydrolase" evidence="2">
    <location>
        <begin position="33"/>
        <end position="299"/>
    </location>
</feature>
<feature type="active site" description="Proton acceptor" evidence="2">
    <location>
        <position position="76"/>
    </location>
</feature>
<feature type="active site" description="Proton donor" evidence="2">
    <location>
        <position position="171"/>
    </location>
</feature>
<feature type="active site" description="Nucleophile" evidence="2">
    <location>
        <position position="203"/>
    </location>
</feature>
<feature type="lipid moiety-binding region" description="GPI-anchor amidated serine" evidence="1">
    <location>
        <position position="531"/>
    </location>
</feature>
<feature type="glycosylation site" description="N-linked (GlcNAc...) asparagine" evidence="1">
    <location>
        <position position="65"/>
    </location>
</feature>
<feature type="glycosylation site" description="N-linked (GlcNAc...) asparagine" evidence="1">
    <location>
        <position position="103"/>
    </location>
</feature>
<feature type="glycosylation site" description="N-linked (GlcNAc...) asparagine" evidence="1">
    <location>
        <position position="120"/>
    </location>
</feature>
<feature type="glycosylation site" description="N-linked (GlcNAc...) asparagine" evidence="1">
    <location>
        <position position="128"/>
    </location>
</feature>
<feature type="glycosylation site" description="N-linked (GlcNAc...) asparagine" evidence="1">
    <location>
        <position position="180"/>
    </location>
</feature>
<feature type="glycosylation site" description="N-linked (GlcNAc...) asparagine" evidence="4">
    <location>
        <position position="354"/>
    </location>
</feature>
<feature type="glycosylation site" description="N-linked (GlcNAc...) asparagine" evidence="1">
    <location>
        <position position="379"/>
    </location>
</feature>
<comment type="subcellular location">
    <subcellularLocation>
        <location evidence="1">Cell membrane</location>
        <topology evidence="1">Lipid-anchor</topology>
        <topology evidence="1">GPI-anchor</topology>
    </subcellularLocation>
</comment>
<comment type="tissue specificity">
    <text evidence="3 5">Expressed in larvae and early pupae (PubMed:10501839). Expressed in third instar larvae (PubMed:25387828).</text>
</comment>
<comment type="induction">
    <text evidence="5">Induced by ethanol.</text>
</comment>
<comment type="similarity">
    <text evidence="7">Belongs to the carbon-nitrogen hydrolase superfamily. BTD/VNN family.</text>
</comment>
<proteinExistence type="evidence at protein level"/>
<keyword id="KW-1003">Cell membrane</keyword>
<keyword id="KW-0325">Glycoprotein</keyword>
<keyword id="KW-0336">GPI-anchor</keyword>
<keyword id="KW-0378">Hydrolase</keyword>
<keyword id="KW-0449">Lipoprotein</keyword>
<keyword id="KW-0472">Membrane</keyword>
<keyword id="KW-1185">Reference proteome</keyword>
<keyword id="KW-0732">Signal</keyword>
<sequence>MSNTWWWLSVVLLILGLMPGMSQQAALAESDYYTAGVVEFKQSILSLSAWSDSLAGYVEIINSENASATDIIVFPESTLNSAGSTTFVPNPEDQINPCLSDPNATYYEEFLVTLSCAARNASKYIVINLTEKQKCEDIPEDTRPCASNGLNVFNTNVVFDRQGVVVSRYRKVHLYGEAKNSTFLPELITFETDFGVTFGHFICFDILFYTPAHQLIVEQGITDFVYPAMWFSQLPFLTAVQTQQGWAYANDVNLLASGASRPSIGNSGSGIYHGRSGTLTSVMRQDSGERAIYVAQVPKYTRSRSLKKRAKRSLQEIQTRQVASSSSFYMKRDYVENYESELLKLDEGTSGAINRTICQGSFCCNFDIAWRSLGTATENGSYYSYRLGTYDGWRNENNVDANYIRNCALFTCSGDSIDDCGKLLPTEGELQQSRVTFTRLAIGVTYPESREFLLFPDTLQDSLLPLEPSQFEWSQRKPTEDSYVQEVRFALKETQELSNLLTFGIYGNYYDNECTFGVGTEEEQLACGYRSGSPGLRILGGWLAMPLIILAIARTMSS</sequence>
<dbReference type="EC" id="3.5.1.-" evidence="7"/>
<dbReference type="EMBL" id="AJ276261">
    <property type="protein sequence ID" value="CAB77020.1"/>
    <property type="molecule type" value="mRNA"/>
</dbReference>
<dbReference type="EMBL" id="AE014298">
    <property type="protein sequence ID" value="AAN09161.1"/>
    <property type="molecule type" value="Genomic_DNA"/>
</dbReference>
<dbReference type="EMBL" id="AY052034">
    <property type="protein sequence ID" value="AAK93458.1"/>
    <property type="molecule type" value="mRNA"/>
</dbReference>
<dbReference type="RefSeq" id="NP_572297.1">
    <property type="nucleotide sequence ID" value="NM_132069.3"/>
</dbReference>
<dbReference type="SMR" id="Q9NFP1"/>
<dbReference type="BioGRID" id="58043">
    <property type="interactions" value="6"/>
</dbReference>
<dbReference type="FunCoup" id="Q9NFP1">
    <property type="interactions" value="15"/>
</dbReference>
<dbReference type="STRING" id="7227.FBpp0070844"/>
<dbReference type="GlyCosmos" id="Q9NFP1">
    <property type="glycosylation" value="7 sites, No reported glycans"/>
</dbReference>
<dbReference type="GlyGen" id="Q9NFP1">
    <property type="glycosylation" value="7 sites"/>
</dbReference>
<dbReference type="iPTMnet" id="Q9NFP1"/>
<dbReference type="PaxDb" id="7227-FBpp0070844"/>
<dbReference type="DNASU" id="31551"/>
<dbReference type="EnsemblMetazoa" id="FBtr0070879">
    <property type="protein sequence ID" value="FBpp0070844"/>
    <property type="gene ID" value="FBgn0040069"/>
</dbReference>
<dbReference type="GeneID" id="31551"/>
<dbReference type="KEGG" id="dme:Dmel_CG32754"/>
<dbReference type="UCSC" id="CG32754-RA">
    <property type="organism name" value="d. melanogaster"/>
</dbReference>
<dbReference type="AGR" id="FB:FBgn0040069"/>
<dbReference type="CTD" id="31551"/>
<dbReference type="FlyBase" id="FBgn0040069">
    <property type="gene designation" value="vanin-like"/>
</dbReference>
<dbReference type="VEuPathDB" id="VectorBase:FBgn0040069"/>
<dbReference type="eggNOG" id="KOG0806">
    <property type="taxonomic scope" value="Eukaryota"/>
</dbReference>
<dbReference type="GeneTree" id="ENSGT00390000013823"/>
<dbReference type="HOGENOM" id="CLU_033209_1_0_1"/>
<dbReference type="InParanoid" id="Q9NFP1"/>
<dbReference type="OMA" id="SGKWNPC"/>
<dbReference type="OrthoDB" id="10250282at2759"/>
<dbReference type="PhylomeDB" id="Q9NFP1"/>
<dbReference type="Reactome" id="R-DME-196780">
    <property type="pathway name" value="Biotin transport and metabolism"/>
</dbReference>
<dbReference type="BioGRID-ORCS" id="31551">
    <property type="hits" value="0 hits in 3 CRISPR screens"/>
</dbReference>
<dbReference type="ChiTaRS" id="vanin-like">
    <property type="organism name" value="fly"/>
</dbReference>
<dbReference type="GenomeRNAi" id="31551"/>
<dbReference type="PRO" id="PR:Q9NFP1"/>
<dbReference type="Proteomes" id="UP000000803">
    <property type="component" value="Chromosome X"/>
</dbReference>
<dbReference type="Bgee" id="FBgn0040069">
    <property type="expression patterns" value="Expressed in enterocyte of posterior adult midgut epithelium (Drosophila) in digestive tract and 18 other cell types or tissues"/>
</dbReference>
<dbReference type="GO" id="GO:0019898">
    <property type="term" value="C:extrinsic component of membrane"/>
    <property type="evidence" value="ECO:0000303"/>
    <property type="project" value="UniProtKB"/>
</dbReference>
<dbReference type="GO" id="GO:0005886">
    <property type="term" value="C:plasma membrane"/>
    <property type="evidence" value="ECO:0007669"/>
    <property type="project" value="UniProtKB-SubCell"/>
</dbReference>
<dbReference type="GO" id="GO:0098552">
    <property type="term" value="C:side of membrane"/>
    <property type="evidence" value="ECO:0007669"/>
    <property type="project" value="UniProtKB-KW"/>
</dbReference>
<dbReference type="GO" id="GO:0016787">
    <property type="term" value="F:hydrolase activity"/>
    <property type="evidence" value="ECO:0000303"/>
    <property type="project" value="UniProtKB"/>
</dbReference>
<dbReference type="GO" id="GO:0017159">
    <property type="term" value="F:pantetheine hydrolase activity"/>
    <property type="evidence" value="ECO:0000250"/>
    <property type="project" value="FlyBase"/>
</dbReference>
<dbReference type="CDD" id="cd07567">
    <property type="entry name" value="biotinidase_like"/>
    <property type="match status" value="1"/>
</dbReference>
<dbReference type="Gene3D" id="3.60.110.10">
    <property type="entry name" value="Carbon-nitrogen hydrolase"/>
    <property type="match status" value="1"/>
</dbReference>
<dbReference type="InterPro" id="IPR012101">
    <property type="entry name" value="Biotinidase-like_euk"/>
</dbReference>
<dbReference type="InterPro" id="IPR040154">
    <property type="entry name" value="Biotinidase/VNN"/>
</dbReference>
<dbReference type="InterPro" id="IPR003010">
    <property type="entry name" value="C-N_Hydrolase"/>
</dbReference>
<dbReference type="InterPro" id="IPR036526">
    <property type="entry name" value="C-N_Hydrolase_sf"/>
</dbReference>
<dbReference type="InterPro" id="IPR043957">
    <property type="entry name" value="Vanin_C"/>
</dbReference>
<dbReference type="PANTHER" id="PTHR10609:SF14">
    <property type="entry name" value="BIOTINIDASE"/>
    <property type="match status" value="1"/>
</dbReference>
<dbReference type="PANTHER" id="PTHR10609">
    <property type="entry name" value="BIOTINIDASE-RELATED"/>
    <property type="match status" value="1"/>
</dbReference>
<dbReference type="Pfam" id="PF00795">
    <property type="entry name" value="CN_hydrolase"/>
    <property type="match status" value="1"/>
</dbReference>
<dbReference type="Pfam" id="PF19018">
    <property type="entry name" value="Vanin_C"/>
    <property type="match status" value="1"/>
</dbReference>
<dbReference type="PIRSF" id="PIRSF011861">
    <property type="entry name" value="Biotinidase"/>
    <property type="match status" value="1"/>
</dbReference>
<dbReference type="SUPFAM" id="SSF56317">
    <property type="entry name" value="Carbon-nitrogen hydrolase"/>
    <property type="match status" value="1"/>
</dbReference>
<dbReference type="PROSITE" id="PS50263">
    <property type="entry name" value="CN_HYDROLASE"/>
    <property type="match status" value="1"/>
</dbReference>
<organism>
    <name type="scientific">Drosophila melanogaster</name>
    <name type="common">Fruit fly</name>
    <dbReference type="NCBI Taxonomy" id="7227"/>
    <lineage>
        <taxon>Eukaryota</taxon>
        <taxon>Metazoa</taxon>
        <taxon>Ecdysozoa</taxon>
        <taxon>Arthropoda</taxon>
        <taxon>Hexapoda</taxon>
        <taxon>Insecta</taxon>
        <taxon>Pterygota</taxon>
        <taxon>Neoptera</taxon>
        <taxon>Endopterygota</taxon>
        <taxon>Diptera</taxon>
        <taxon>Brachycera</taxon>
        <taxon>Muscomorpha</taxon>
        <taxon>Ephydroidea</taxon>
        <taxon>Drosophilidae</taxon>
        <taxon>Drosophila</taxon>
        <taxon>Sophophora</taxon>
    </lineage>
</organism>
<evidence type="ECO:0000255" key="1"/>
<evidence type="ECO:0000255" key="2">
    <source>
        <dbReference type="PROSITE-ProRule" id="PRU00054"/>
    </source>
</evidence>
<evidence type="ECO:0000269" key="3">
    <source>
    </source>
</evidence>
<evidence type="ECO:0000269" key="4">
    <source>
    </source>
</evidence>
<evidence type="ECO:0000269" key="5">
    <source>
    </source>
</evidence>
<evidence type="ECO:0000303" key="6">
    <source>
    </source>
</evidence>
<evidence type="ECO:0000305" key="7"/>
<evidence type="ECO:0000312" key="8">
    <source>
        <dbReference type="FlyBase" id="FBgn0040069"/>
    </source>
</evidence>
<accession>Q9NFP1</accession>
<accession>Q9W431</accession>
<protein>
    <recommendedName>
        <fullName evidence="8">Vanin-like protein 1</fullName>
        <ecNumber evidence="7">3.5.1.-</ecNumber>
    </recommendedName>
</protein>
<name>VNNL1_DROME</name>